<name>SODC_HUMLT</name>
<sequence>MVKAVAVLRGDSKITGTVTFEQANESAPTTVSWNITGHDPNAERGMHIHQFGDNTNGCTSAGPHYNPFKKTHGAPTDEVRHVGDLGNIKTDAEGNAVGSVQDKLIKVIGAESILGRTIVVHAGTDDLGRGGNEESKKTGNAGPRPACGVIGIA</sequence>
<dbReference type="EC" id="1.15.1.1" evidence="3"/>
<dbReference type="SMR" id="P83684"/>
<dbReference type="iPTMnet" id="P83684"/>
<dbReference type="GO" id="GO:0005737">
    <property type="term" value="C:cytoplasm"/>
    <property type="evidence" value="ECO:0007669"/>
    <property type="project" value="UniProtKB-SubCell"/>
</dbReference>
<dbReference type="GO" id="GO:0005507">
    <property type="term" value="F:copper ion binding"/>
    <property type="evidence" value="ECO:0007669"/>
    <property type="project" value="InterPro"/>
</dbReference>
<dbReference type="GO" id="GO:0004784">
    <property type="term" value="F:superoxide dismutase activity"/>
    <property type="evidence" value="ECO:0007669"/>
    <property type="project" value="UniProtKB-EC"/>
</dbReference>
<dbReference type="CDD" id="cd00305">
    <property type="entry name" value="Cu-Zn_Superoxide_Dismutase"/>
    <property type="match status" value="1"/>
</dbReference>
<dbReference type="FunFam" id="2.60.40.200:FF:000001">
    <property type="entry name" value="Superoxide dismutase [Cu-Zn]"/>
    <property type="match status" value="1"/>
</dbReference>
<dbReference type="Gene3D" id="2.60.40.200">
    <property type="entry name" value="Superoxide dismutase, copper/zinc binding domain"/>
    <property type="match status" value="1"/>
</dbReference>
<dbReference type="InterPro" id="IPR036423">
    <property type="entry name" value="SOD-like_Cu/Zn_dom_sf"/>
</dbReference>
<dbReference type="InterPro" id="IPR024134">
    <property type="entry name" value="SOD_Cu/Zn_/chaperone"/>
</dbReference>
<dbReference type="InterPro" id="IPR018152">
    <property type="entry name" value="SOD_Cu/Zn_BS"/>
</dbReference>
<dbReference type="InterPro" id="IPR001424">
    <property type="entry name" value="SOD_Cu_Zn_dom"/>
</dbReference>
<dbReference type="PANTHER" id="PTHR10003">
    <property type="entry name" value="SUPEROXIDE DISMUTASE CU-ZN -RELATED"/>
    <property type="match status" value="1"/>
</dbReference>
<dbReference type="Pfam" id="PF00080">
    <property type="entry name" value="Sod_Cu"/>
    <property type="match status" value="1"/>
</dbReference>
<dbReference type="PRINTS" id="PR00068">
    <property type="entry name" value="CUZNDISMTASE"/>
</dbReference>
<dbReference type="SUPFAM" id="SSF49329">
    <property type="entry name" value="Cu,Zn superoxide dismutase-like"/>
    <property type="match status" value="1"/>
</dbReference>
<dbReference type="PROSITE" id="PS00087">
    <property type="entry name" value="SOD_CU_ZN_1"/>
    <property type="match status" value="1"/>
</dbReference>
<dbReference type="PROSITE" id="PS00332">
    <property type="entry name" value="SOD_CU_ZN_2"/>
    <property type="match status" value="1"/>
</dbReference>
<comment type="function">
    <text evidence="3">Destroys radicals which are normally produced within the cells and which are toxic to biological systems.</text>
</comment>
<comment type="catalytic activity">
    <reaction evidence="3">
        <text>2 superoxide + 2 H(+) = H2O2 + O2</text>
        <dbReference type="Rhea" id="RHEA:20696"/>
        <dbReference type="ChEBI" id="CHEBI:15378"/>
        <dbReference type="ChEBI" id="CHEBI:15379"/>
        <dbReference type="ChEBI" id="CHEBI:16240"/>
        <dbReference type="ChEBI" id="CHEBI:18421"/>
        <dbReference type="EC" id="1.15.1.1"/>
    </reaction>
</comment>
<comment type="cofactor">
    <cofactor evidence="3">
        <name>Cu cation</name>
        <dbReference type="ChEBI" id="CHEBI:23378"/>
    </cofactor>
    <text evidence="3">Binds 1 copper ion per subunit.</text>
</comment>
<comment type="cofactor">
    <cofactor evidence="3">
        <name>Zn(2+)</name>
        <dbReference type="ChEBI" id="CHEBI:29105"/>
    </cofactor>
    <text evidence="3">Binds 1 zinc ion per subunit.</text>
</comment>
<comment type="subunit">
    <text evidence="3">Homodimer.</text>
</comment>
<comment type="subcellular location">
    <subcellularLocation>
        <location evidence="1">Cytoplasm</location>
    </subcellularLocation>
</comment>
<comment type="induction">
    <text evidence="4">By high concentrations of copper. Inhibited by copper starvation.</text>
</comment>
<comment type="mass spectrometry"/>
<comment type="mass spectrometry"/>
<comment type="miscellaneous">
    <text>Protects mice from mortality after experimental infection with influenza A virus (strain A/Aichi/2/68).</text>
</comment>
<comment type="similarity">
    <text evidence="5">Belongs to the Cu-Zn superoxide dismutase family.</text>
</comment>
<evidence type="ECO:0000250" key="1">
    <source>
        <dbReference type="UniProtKB" id="P00445"/>
    </source>
</evidence>
<evidence type="ECO:0000256" key="2">
    <source>
        <dbReference type="SAM" id="MobiDB-lite"/>
    </source>
</evidence>
<evidence type="ECO:0000269" key="3">
    <source>
    </source>
</evidence>
<evidence type="ECO:0000269" key="4">
    <source>
    </source>
</evidence>
<evidence type="ECO:0000305" key="5"/>
<protein>
    <recommendedName>
        <fullName>Superoxide dismutase [Cu-Zn]</fullName>
        <ecNumber evidence="3">1.15.1.1</ecNumber>
    </recommendedName>
    <alternativeName>
        <fullName>HlSOD</fullName>
    </alternativeName>
</protein>
<organism evidence="5">
    <name type="scientific">Humicola lutea</name>
    <dbReference type="NCBI Taxonomy" id="253246"/>
    <lineage>
        <taxon>Eukaryota</taxon>
        <taxon>Fungi</taxon>
        <taxon>Dikarya</taxon>
        <taxon>Ascomycota</taxon>
        <taxon>Pezizomycotina</taxon>
        <taxon>Sordariomycetes</taxon>
        <taxon>Sordariomycetidae</taxon>
        <taxon>Sordariales</taxon>
        <taxon>Chaetomiaceae</taxon>
        <taxon>Humicola</taxon>
    </lineage>
</organism>
<feature type="initiator methionine" description="Removed" evidence="3 4">
    <location>
        <position position="1"/>
    </location>
</feature>
<feature type="chain" id="PRO_0000164121" description="Superoxide dismutase [Cu-Zn]">
    <location>
        <begin position="2"/>
        <end position="153"/>
    </location>
</feature>
<feature type="region of interest" description="Disordered" evidence="2">
    <location>
        <begin position="126"/>
        <end position="145"/>
    </location>
</feature>
<feature type="compositionally biased region" description="Basic and acidic residues" evidence="2">
    <location>
        <begin position="126"/>
        <end position="137"/>
    </location>
</feature>
<feature type="binding site" evidence="1">
    <location>
        <position position="47"/>
    </location>
    <ligand>
        <name>Cu cation</name>
        <dbReference type="ChEBI" id="CHEBI:23378"/>
        <note>catalytic</note>
    </ligand>
</feature>
<feature type="binding site" evidence="1">
    <location>
        <position position="49"/>
    </location>
    <ligand>
        <name>Cu cation</name>
        <dbReference type="ChEBI" id="CHEBI:23378"/>
        <note>catalytic</note>
    </ligand>
</feature>
<feature type="binding site" evidence="1">
    <location>
        <position position="64"/>
    </location>
    <ligand>
        <name>Cu cation</name>
        <dbReference type="ChEBI" id="CHEBI:23378"/>
        <note>catalytic</note>
    </ligand>
</feature>
<feature type="binding site" evidence="1">
    <location>
        <position position="64"/>
    </location>
    <ligand>
        <name>Zn(2+)</name>
        <dbReference type="ChEBI" id="CHEBI:29105"/>
        <note>structural</note>
    </ligand>
</feature>
<feature type="binding site" evidence="1">
    <location>
        <position position="72"/>
    </location>
    <ligand>
        <name>Zn(2+)</name>
        <dbReference type="ChEBI" id="CHEBI:29105"/>
        <note>structural</note>
    </ligand>
</feature>
<feature type="binding site" evidence="1">
    <location>
        <position position="81"/>
    </location>
    <ligand>
        <name>Zn(2+)</name>
        <dbReference type="ChEBI" id="CHEBI:29105"/>
        <note>structural</note>
    </ligand>
</feature>
<feature type="binding site" evidence="1">
    <location>
        <position position="84"/>
    </location>
    <ligand>
        <name>Zn(2+)</name>
        <dbReference type="ChEBI" id="CHEBI:29105"/>
        <note>structural</note>
    </ligand>
</feature>
<feature type="binding site" evidence="1">
    <location>
        <position position="121"/>
    </location>
    <ligand>
        <name>Cu cation</name>
        <dbReference type="ChEBI" id="CHEBI:23378"/>
        <note>catalytic</note>
    </ligand>
</feature>
<feature type="binding site" evidence="1">
    <location>
        <position position="144"/>
    </location>
    <ligand>
        <name>substrate</name>
    </ligand>
</feature>
<feature type="glycosylation site" description="N-linked (GlcNAc...) asparagine" evidence="4">
    <location>
        <position position="24"/>
    </location>
</feature>
<feature type="disulfide bond" evidence="4">
    <location>
        <begin position="58"/>
        <end position="147"/>
    </location>
</feature>
<keyword id="KW-0049">Antioxidant</keyword>
<keyword id="KW-0186">Copper</keyword>
<keyword id="KW-0963">Cytoplasm</keyword>
<keyword id="KW-0903">Direct protein sequencing</keyword>
<keyword id="KW-1015">Disulfide bond</keyword>
<keyword id="KW-0325">Glycoprotein</keyword>
<keyword id="KW-0479">Metal-binding</keyword>
<keyword id="KW-0560">Oxidoreductase</keyword>
<keyword id="KW-0862">Zinc</keyword>
<reference key="1">
    <citation type="journal article" date="2004" name="Biochem. Biophys. Res. Commun.">
        <title>Structural and functional analysis of glycosylated Cu/Zn-superoxide dismutase from the fungal strain Humicola lutea 103.</title>
        <authorList>
            <person name="Dolashka-Angelova P."/>
            <person name="Stevanovic S."/>
            <person name="Dolashki A."/>
            <person name="Angelova M."/>
            <person name="Serkedjieva J."/>
            <person name="Krumova E."/>
            <person name="Pashova S."/>
            <person name="Zacharieva S."/>
            <person name="Voelter W."/>
        </authorList>
    </citation>
    <scope>PROTEIN SEQUENCE OF 2-153</scope>
    <scope>INDUCTION BY COPPER</scope>
    <scope>DISULFIDE BOND</scope>
    <scope>MASS SPECTROMETRY</scope>
    <scope>GLYCOSYLATION</scope>
    <source>
        <strain>103</strain>
    </source>
</reference>
<reference evidence="5" key="2">
    <citation type="journal article" date="2001" name="Microbiology">
        <title>A novel glycosylated Cu/Zn-containing superoxide dismutase: production and potential therapeutic effect.</title>
        <authorList>
            <person name="Angelova M."/>
            <person name="Dolashka-Angelova P."/>
            <person name="Ivanova E."/>
            <person name="Serkedjieva J."/>
            <person name="Slokoska L."/>
            <person name="Pashova S."/>
            <person name="Toshkova R."/>
            <person name="Vassilev S."/>
            <person name="Simeonov I."/>
            <person name="Hartmann H.-J."/>
            <person name="Stoeva S."/>
            <person name="Weser U."/>
            <person name="Voelter W."/>
        </authorList>
    </citation>
    <scope>PROTEIN SEQUENCE OF 2-36</scope>
    <scope>FUNCTION</scope>
    <scope>CATALYTIC ACTIVITY</scope>
    <scope>COFACTOR</scope>
    <scope>SUBUNIT</scope>
    <scope>MASS SPECTROMETRY</scope>
    <source>
        <strain evidence="3">103</strain>
        <tissue evidence="3">Mycelium</tissue>
    </source>
</reference>
<accession>P83684</accession>
<proteinExistence type="evidence at protein level"/>